<organism>
    <name type="scientific">Bacillus subtilis (strain 168)</name>
    <dbReference type="NCBI Taxonomy" id="224308"/>
    <lineage>
        <taxon>Bacteria</taxon>
        <taxon>Bacillati</taxon>
        <taxon>Bacillota</taxon>
        <taxon>Bacilli</taxon>
        <taxon>Bacillales</taxon>
        <taxon>Bacillaceae</taxon>
        <taxon>Bacillus</taxon>
    </lineage>
</organism>
<evidence type="ECO:0000255" key="1"/>
<evidence type="ECO:0000269" key="2">
    <source>
    </source>
</evidence>
<evidence type="ECO:0000269" key="3">
    <source>
    </source>
</evidence>
<evidence type="ECO:0000269" key="4">
    <source>
    </source>
</evidence>
<evidence type="ECO:0000269" key="5">
    <source>
    </source>
</evidence>
<evidence type="ECO:0000269" key="6">
    <source>
    </source>
</evidence>
<evidence type="ECO:0000305" key="7"/>
<evidence type="ECO:0000305" key="8">
    <source>
    </source>
</evidence>
<evidence type="ECO:0007829" key="9">
    <source>
        <dbReference type="PDB" id="1X60"/>
    </source>
</evidence>
<sequence>MVKIFIDPGHGGSDPGATGNGLQEKTLTLQIALALRTILTNEYEGVSLLLSRTSDQYVSLNDRTNAANNWGADFFLSIHVNSGGGTGFESYIYPDVGAPTTTYQSTIHSEVIQAVDFADRGKKTANFHVLRESAMPALLTENGFIDTVSDANKLKTSSFIQSLARGHANGLEQAFNLKKTSSSGLYKVQIGAFKVKANADSLASNAEAKGFDSIVLLKDGLYKVQIGAFSSKDNADTLAARAKNAGFDAIVILES</sequence>
<dbReference type="EC" id="3.5.1.28"/>
<dbReference type="EMBL" id="D14666">
    <property type="protein sequence ID" value="BAA03500.1"/>
    <property type="molecule type" value="Genomic_DNA"/>
</dbReference>
<dbReference type="EMBL" id="AL009126">
    <property type="protein sequence ID" value="CAB13625.2"/>
    <property type="molecule type" value="Genomic_DNA"/>
</dbReference>
<dbReference type="EMBL" id="Z68500">
    <property type="protein sequence ID" value="CAA92813.1"/>
    <property type="molecule type" value="Genomic_DNA"/>
</dbReference>
<dbReference type="PIR" id="A36935">
    <property type="entry name" value="A36935"/>
</dbReference>
<dbReference type="RefSeq" id="NP_389623.2">
    <property type="nucleotide sequence ID" value="NC_000964.3"/>
</dbReference>
<dbReference type="RefSeq" id="WP_003244862.1">
    <property type="nucleotide sequence ID" value="NZ_OZ025638.1"/>
</dbReference>
<dbReference type="PDB" id="1X60">
    <property type="method" value="NMR"/>
    <property type="chains" value="A=177-255"/>
</dbReference>
<dbReference type="PDBsum" id="1X60"/>
<dbReference type="BMRB" id="Q06320"/>
<dbReference type="SMR" id="Q06320"/>
<dbReference type="FunCoup" id="Q06320">
    <property type="interactions" value="44"/>
</dbReference>
<dbReference type="STRING" id="224308.BSU17410"/>
<dbReference type="PaxDb" id="224308-BSU17410"/>
<dbReference type="EnsemblBacteria" id="CAB13625">
    <property type="protein sequence ID" value="CAB13625"/>
    <property type="gene ID" value="BSU_17410"/>
</dbReference>
<dbReference type="GeneID" id="940088"/>
<dbReference type="KEGG" id="bsu:BSU17410"/>
<dbReference type="PATRIC" id="fig|224308.179.peg.1887"/>
<dbReference type="eggNOG" id="COG0860">
    <property type="taxonomic scope" value="Bacteria"/>
</dbReference>
<dbReference type="InParanoid" id="Q06320"/>
<dbReference type="OrthoDB" id="9763643at2"/>
<dbReference type="PhylomeDB" id="Q06320"/>
<dbReference type="BioCyc" id="BSUB:BSU17410-MONOMER"/>
<dbReference type="EvolutionaryTrace" id="Q06320"/>
<dbReference type="Proteomes" id="UP000001570">
    <property type="component" value="Chromosome"/>
</dbReference>
<dbReference type="GO" id="GO:0005576">
    <property type="term" value="C:extracellular region"/>
    <property type="evidence" value="ECO:0007669"/>
    <property type="project" value="UniProtKB-KW"/>
</dbReference>
<dbReference type="GO" id="GO:0030288">
    <property type="term" value="C:outer membrane-bounded periplasmic space"/>
    <property type="evidence" value="ECO:0000318"/>
    <property type="project" value="GO_Central"/>
</dbReference>
<dbReference type="GO" id="GO:0046872">
    <property type="term" value="F:metal ion binding"/>
    <property type="evidence" value="ECO:0007669"/>
    <property type="project" value="UniProtKB-KW"/>
</dbReference>
<dbReference type="GO" id="GO:0008745">
    <property type="term" value="F:N-acetylmuramoyl-L-alanine amidase activity"/>
    <property type="evidence" value="ECO:0000318"/>
    <property type="project" value="GO_Central"/>
</dbReference>
<dbReference type="GO" id="GO:0042834">
    <property type="term" value="F:peptidoglycan binding"/>
    <property type="evidence" value="ECO:0007669"/>
    <property type="project" value="InterPro"/>
</dbReference>
<dbReference type="GO" id="GO:0071555">
    <property type="term" value="P:cell wall organization"/>
    <property type="evidence" value="ECO:0007669"/>
    <property type="project" value="UniProtKB-KW"/>
</dbReference>
<dbReference type="GO" id="GO:0030420">
    <property type="term" value="P:establishment of competence for transformation"/>
    <property type="evidence" value="ECO:0007669"/>
    <property type="project" value="UniProtKB-KW"/>
</dbReference>
<dbReference type="GO" id="GO:0043093">
    <property type="term" value="P:FtsZ-dependent cytokinesis"/>
    <property type="evidence" value="ECO:0000318"/>
    <property type="project" value="GO_Central"/>
</dbReference>
<dbReference type="GO" id="GO:0009253">
    <property type="term" value="P:peptidoglycan catabolic process"/>
    <property type="evidence" value="ECO:0007669"/>
    <property type="project" value="InterPro"/>
</dbReference>
<dbReference type="GO" id="GO:0030435">
    <property type="term" value="P:sporulation resulting in formation of a cellular spore"/>
    <property type="evidence" value="ECO:0007669"/>
    <property type="project" value="UniProtKB-KW"/>
</dbReference>
<dbReference type="CDD" id="cd02696">
    <property type="entry name" value="MurNAc-LAA"/>
    <property type="match status" value="1"/>
</dbReference>
<dbReference type="FunFam" id="3.40.630.40:FF:000010">
    <property type="entry name" value="N-acetylmuramoyl-L-alanine amidase"/>
    <property type="match status" value="1"/>
</dbReference>
<dbReference type="Gene3D" id="3.30.70.1070">
    <property type="entry name" value="Sporulation related repeat"/>
    <property type="match status" value="1"/>
</dbReference>
<dbReference type="Gene3D" id="3.40.630.40">
    <property type="entry name" value="Zn-dependent exopeptidases"/>
    <property type="match status" value="1"/>
</dbReference>
<dbReference type="InterPro" id="IPR002508">
    <property type="entry name" value="MurNAc-LAA_cat"/>
</dbReference>
<dbReference type="InterPro" id="IPR050695">
    <property type="entry name" value="N-acetylmuramoyl_amidase_3"/>
</dbReference>
<dbReference type="InterPro" id="IPR007730">
    <property type="entry name" value="SPOR-like_dom"/>
</dbReference>
<dbReference type="InterPro" id="IPR036680">
    <property type="entry name" value="SPOR-like_sf"/>
</dbReference>
<dbReference type="PANTHER" id="PTHR30404">
    <property type="entry name" value="N-ACETYLMURAMOYL-L-ALANINE AMIDASE"/>
    <property type="match status" value="1"/>
</dbReference>
<dbReference type="PANTHER" id="PTHR30404:SF0">
    <property type="entry name" value="N-ACETYLMURAMOYL-L-ALANINE AMIDASE AMIC"/>
    <property type="match status" value="1"/>
</dbReference>
<dbReference type="Pfam" id="PF01520">
    <property type="entry name" value="Amidase_3"/>
    <property type="match status" value="1"/>
</dbReference>
<dbReference type="Pfam" id="PF05036">
    <property type="entry name" value="SPOR"/>
    <property type="match status" value="1"/>
</dbReference>
<dbReference type="SMART" id="SM00646">
    <property type="entry name" value="Ami_3"/>
    <property type="match status" value="1"/>
</dbReference>
<dbReference type="SUPFAM" id="SSF110997">
    <property type="entry name" value="Sporulation related repeat"/>
    <property type="match status" value="1"/>
</dbReference>
<dbReference type="SUPFAM" id="SSF53187">
    <property type="entry name" value="Zn-dependent exopeptidases"/>
    <property type="match status" value="1"/>
</dbReference>
<dbReference type="PROSITE" id="PS51724">
    <property type="entry name" value="SPOR"/>
    <property type="match status" value="1"/>
</dbReference>
<name>CWLC_BACSU</name>
<reference key="1">
    <citation type="journal article" date="1993" name="J. Bacteriol.">
        <title>Molecular cloning of a sporulation-specific cell wall hydrolase gene of Bacillus subtilis.</title>
        <authorList>
            <person name="Kuroda A."/>
            <person name="Asami Y."/>
            <person name="Sekiguchi J."/>
        </authorList>
    </citation>
    <scope>NUCLEOTIDE SEQUENCE [GENOMIC DNA]</scope>
    <scope>INDUCTION</scope>
    <source>
        <strain>168</strain>
    </source>
</reference>
<reference key="2">
    <citation type="journal article" date="1997" name="Nature">
        <title>The complete genome sequence of the Gram-positive bacterium Bacillus subtilis.</title>
        <authorList>
            <person name="Kunst F."/>
            <person name="Ogasawara N."/>
            <person name="Moszer I."/>
            <person name="Albertini A.M."/>
            <person name="Alloni G."/>
            <person name="Azevedo V."/>
            <person name="Bertero M.G."/>
            <person name="Bessieres P."/>
            <person name="Bolotin A."/>
            <person name="Borchert S."/>
            <person name="Borriss R."/>
            <person name="Boursier L."/>
            <person name="Brans A."/>
            <person name="Braun M."/>
            <person name="Brignell S.C."/>
            <person name="Bron S."/>
            <person name="Brouillet S."/>
            <person name="Bruschi C.V."/>
            <person name="Caldwell B."/>
            <person name="Capuano V."/>
            <person name="Carter N.M."/>
            <person name="Choi S.-K."/>
            <person name="Codani J.-J."/>
            <person name="Connerton I.F."/>
            <person name="Cummings N.J."/>
            <person name="Daniel R.A."/>
            <person name="Denizot F."/>
            <person name="Devine K.M."/>
            <person name="Duesterhoeft A."/>
            <person name="Ehrlich S.D."/>
            <person name="Emmerson P.T."/>
            <person name="Entian K.-D."/>
            <person name="Errington J."/>
            <person name="Fabret C."/>
            <person name="Ferrari E."/>
            <person name="Foulger D."/>
            <person name="Fritz C."/>
            <person name="Fujita M."/>
            <person name="Fujita Y."/>
            <person name="Fuma S."/>
            <person name="Galizzi A."/>
            <person name="Galleron N."/>
            <person name="Ghim S.-Y."/>
            <person name="Glaser P."/>
            <person name="Goffeau A."/>
            <person name="Golightly E.J."/>
            <person name="Grandi G."/>
            <person name="Guiseppi G."/>
            <person name="Guy B.J."/>
            <person name="Haga K."/>
            <person name="Haiech J."/>
            <person name="Harwood C.R."/>
            <person name="Henaut A."/>
            <person name="Hilbert H."/>
            <person name="Holsappel S."/>
            <person name="Hosono S."/>
            <person name="Hullo M.-F."/>
            <person name="Itaya M."/>
            <person name="Jones L.-M."/>
            <person name="Joris B."/>
            <person name="Karamata D."/>
            <person name="Kasahara Y."/>
            <person name="Klaerr-Blanchard M."/>
            <person name="Klein C."/>
            <person name="Kobayashi Y."/>
            <person name="Koetter P."/>
            <person name="Koningstein G."/>
            <person name="Krogh S."/>
            <person name="Kumano M."/>
            <person name="Kurita K."/>
            <person name="Lapidus A."/>
            <person name="Lardinois S."/>
            <person name="Lauber J."/>
            <person name="Lazarevic V."/>
            <person name="Lee S.-M."/>
            <person name="Levine A."/>
            <person name="Liu H."/>
            <person name="Masuda S."/>
            <person name="Mauel C."/>
            <person name="Medigue C."/>
            <person name="Medina N."/>
            <person name="Mellado R.P."/>
            <person name="Mizuno M."/>
            <person name="Moestl D."/>
            <person name="Nakai S."/>
            <person name="Noback M."/>
            <person name="Noone D."/>
            <person name="O'Reilly M."/>
            <person name="Ogawa K."/>
            <person name="Ogiwara A."/>
            <person name="Oudega B."/>
            <person name="Park S.-H."/>
            <person name="Parro V."/>
            <person name="Pohl T.M."/>
            <person name="Portetelle D."/>
            <person name="Porwollik S."/>
            <person name="Prescott A.M."/>
            <person name="Presecan E."/>
            <person name="Pujic P."/>
            <person name="Purnelle B."/>
            <person name="Rapoport G."/>
            <person name="Rey M."/>
            <person name="Reynolds S."/>
            <person name="Rieger M."/>
            <person name="Rivolta C."/>
            <person name="Rocha E."/>
            <person name="Roche B."/>
            <person name="Rose M."/>
            <person name="Sadaie Y."/>
            <person name="Sato T."/>
            <person name="Scanlan E."/>
            <person name="Schleich S."/>
            <person name="Schroeter R."/>
            <person name="Scoffone F."/>
            <person name="Sekiguchi J."/>
            <person name="Sekowska A."/>
            <person name="Seror S.J."/>
            <person name="Serror P."/>
            <person name="Shin B.-S."/>
            <person name="Soldo B."/>
            <person name="Sorokin A."/>
            <person name="Tacconi E."/>
            <person name="Takagi T."/>
            <person name="Takahashi H."/>
            <person name="Takemaru K."/>
            <person name="Takeuchi M."/>
            <person name="Tamakoshi A."/>
            <person name="Tanaka T."/>
            <person name="Terpstra P."/>
            <person name="Tognoni A."/>
            <person name="Tosato V."/>
            <person name="Uchiyama S."/>
            <person name="Vandenbol M."/>
            <person name="Vannier F."/>
            <person name="Vassarotti A."/>
            <person name="Viari A."/>
            <person name="Wambutt R."/>
            <person name="Wedler E."/>
            <person name="Wedler H."/>
            <person name="Weitzenegger T."/>
            <person name="Winters P."/>
            <person name="Wipat A."/>
            <person name="Yamamoto H."/>
            <person name="Yamane K."/>
            <person name="Yasumoto K."/>
            <person name="Yata K."/>
            <person name="Yoshida K."/>
            <person name="Yoshikawa H.-F."/>
            <person name="Zumstein E."/>
            <person name="Yoshikawa H."/>
            <person name="Danchin A."/>
        </authorList>
    </citation>
    <scope>NUCLEOTIDE SEQUENCE [LARGE SCALE GENOMIC DNA]</scope>
    <source>
        <strain>168</strain>
    </source>
</reference>
<reference key="3">
    <citation type="journal article" date="2009" name="Microbiology">
        <title>From a consortium sequence to a unified sequence: the Bacillus subtilis 168 reference genome a decade later.</title>
        <authorList>
            <person name="Barbe V."/>
            <person name="Cruveiller S."/>
            <person name="Kunst F."/>
            <person name="Lenoble P."/>
            <person name="Meurice G."/>
            <person name="Sekowska A."/>
            <person name="Vallenet D."/>
            <person name="Wang T."/>
            <person name="Moszer I."/>
            <person name="Medigue C."/>
            <person name="Danchin A."/>
        </authorList>
    </citation>
    <scope>SEQUENCE REVISION TO 158</scope>
</reference>
<reference key="4">
    <citation type="journal article" date="1995" name="J. Bacteriol.">
        <title>Characterization of the involvement of two compensatory autolysins in mother cell lysis during sporulation of Bacillus subtilis 168.</title>
        <authorList>
            <person name="Smith T.J."/>
            <person name="Foster S.J."/>
        </authorList>
    </citation>
    <scope>PROTEIN SEQUENCE OF 2-11</scope>
    <scope>FUNCTION</scope>
    <scope>CHARACTERIZATION</scope>
    <scope>SUBCELLULAR LOCATION</scope>
    <source>
        <strain>168</strain>
    </source>
</reference>
<reference key="5">
    <citation type="submission" date="1996-01" db="EMBL/GenBank/DDBJ databases">
        <authorList>
            <person name="Scotti C."/>
            <person name="Valbuzzi A."/>
            <person name="Perego M."/>
            <person name="Galizzi A."/>
            <person name="Albertini A.M."/>
        </authorList>
    </citation>
    <scope>NUCLEOTIDE SEQUENCE [GENOMIC DNA] OF 115-255</scope>
    <source>
        <strain>168</strain>
    </source>
</reference>
<reference key="6">
    <citation type="journal article" date="2000" name="Biosci. Biotechnol. Biochem.">
        <title>Overexpression, purification, and characterization of Bacillus subtilis N-acetylmuramoyl-L-alanine amidase CwlC.</title>
        <authorList>
            <person name="Shida T."/>
            <person name="Hattori H."/>
            <person name="Ise F."/>
            <person name="Sekiguchi J."/>
        </authorList>
    </citation>
    <scope>FUNCTION</scope>
    <scope>BIOPHYSICOCHEMICAL PROPERTIES</scope>
    <scope>ACTIVITY REGULATION</scope>
</reference>
<reference key="7">
    <citation type="journal article" date="2001" name="J. Biol. Chem.">
        <title>Mutational analysis of catalytic sites of the cell wall lytic N-acetylmuramoyl-L-alanine amidases CwlC and CwlV.</title>
        <authorList>
            <person name="Shida T."/>
            <person name="Hattori H."/>
            <person name="Ise F."/>
            <person name="Sekiguchi J."/>
        </authorList>
    </citation>
    <scope>COFACTOR</scope>
    <scope>MUTAGENESIS OF HIS-10; GLU-24; ASP-55; HIS-79; ASN-81 AND GLU-141</scope>
</reference>
<reference key="8">
    <citation type="journal article" date="2005" name="Biochemistry">
        <title>Solution structure of the peptidoglycan binding domain of Bacillus subtilis cell wall lytic enzyme CwlC: characterization of the sporulation-related repeats by NMR.</title>
        <authorList>
            <person name="Mishima M."/>
            <person name="Shida T."/>
            <person name="Yabuki K."/>
            <person name="Kato K."/>
            <person name="Sekiguchi J."/>
            <person name="Kojima C."/>
        </authorList>
    </citation>
    <scope>STRUCTURE BY NMR OF 177-255</scope>
    <scope>DOMAIN</scope>
</reference>
<comment type="function">
    <text evidence="2 5">Autolysins are involved in some important biological processes such as cell separation, cell-wall turnover, competence for genetic transformation, formation of the flagella - in particular of its basal body - and sporulation. CwlC is able to hydrolyze type A cell walls such as B.subtilis. Its main function is to lyze the mother cell wall peptidoglycan, playing a role during sporulation.</text>
</comment>
<comment type="catalytic activity">
    <reaction>
        <text>Hydrolyzes the link between N-acetylmuramoyl residues and L-amino acid residues in certain cell-wall glycopeptides.</text>
        <dbReference type="EC" id="3.5.1.28"/>
    </reaction>
</comment>
<comment type="cofactor">
    <cofactor evidence="8">
        <name>Zn(2+)</name>
        <dbReference type="ChEBI" id="CHEBI:29105"/>
    </cofactor>
</comment>
<comment type="activity regulation">
    <text evidence="2">Inhibited by EDTA.</text>
</comment>
<comment type="biophysicochemical properties">
    <phDependence>
        <text evidence="2">Optimum pH is 8.5-9.5.</text>
    </phDependence>
    <temperatureDependence>
        <text evidence="2">Optimum temperature is 60 degrees Celsius.</text>
    </temperatureDependence>
</comment>
<comment type="subcellular location">
    <subcellularLocation>
        <location evidence="5">Secreted</location>
        <location evidence="5">Cell wall</location>
    </subcellularLocation>
    <text>Is associated with the mother cell wall of sporulating cells.</text>
</comment>
<comment type="induction">
    <text evidence="6">Induced at 6 to 7 hours after sporulation.</text>
</comment>
<comment type="domain">
    <text evidence="4">Contains an N-terminal catalytic domain and two C-terminal tandem repeat sequences that play an important role in peptidoglycan binding.</text>
</comment>
<comment type="similarity">
    <text evidence="7">Belongs to the N-acetylmuramoyl-L-alanine amidase 3 family.</text>
</comment>
<protein>
    <recommendedName>
        <fullName>Sporulation-specific N-acetylmuramoyl-L-alanine amidase</fullName>
        <ecNumber>3.5.1.28</ecNumber>
    </recommendedName>
    <alternativeName>
        <fullName>Autolysin</fullName>
    </alternativeName>
    <alternativeName>
        <fullName>Cell wall hydrolase</fullName>
    </alternativeName>
</protein>
<feature type="initiator methionine" description="Removed" evidence="5">
    <location>
        <position position="1"/>
    </location>
</feature>
<feature type="chain" id="PRO_0000164418" description="Sporulation-specific N-acetylmuramoyl-L-alanine amidase">
    <location>
        <begin position="2"/>
        <end position="255"/>
    </location>
</feature>
<feature type="domain" description="MurNAc-LAA" evidence="1">
    <location>
        <begin position="4"/>
        <end position="172"/>
    </location>
</feature>
<feature type="domain" description="SPOR">
    <location>
        <begin position="180"/>
        <end position="254"/>
    </location>
</feature>
<feature type="repeat" description="1">
    <location>
        <begin position="184"/>
        <end position="219"/>
    </location>
</feature>
<feature type="repeat" description="2">
    <location>
        <begin position="220"/>
        <end position="255"/>
    </location>
</feature>
<feature type="region of interest" description="2 X 35 AA approximate tandem repeats">
    <location>
        <begin position="184"/>
        <end position="255"/>
    </location>
</feature>
<feature type="active site" evidence="1">
    <location>
        <position position="141"/>
    </location>
</feature>
<feature type="binding site" evidence="1">
    <location>
        <position position="10"/>
    </location>
    <ligand>
        <name>Zn(2+)</name>
        <dbReference type="ChEBI" id="CHEBI:29105"/>
    </ligand>
</feature>
<feature type="binding site" evidence="1">
    <location>
        <position position="24"/>
    </location>
    <ligand>
        <name>Zn(2+)</name>
        <dbReference type="ChEBI" id="CHEBI:29105"/>
    </ligand>
</feature>
<feature type="binding site" evidence="1">
    <location>
        <position position="79"/>
    </location>
    <ligand>
        <name>Zn(2+)</name>
        <dbReference type="ChEBI" id="CHEBI:29105"/>
    </ligand>
</feature>
<feature type="mutagenesis site" description="23% of wild-type activity." evidence="3">
    <original>H</original>
    <variation>Q</variation>
    <location>
        <position position="10"/>
    </location>
</feature>
<feature type="mutagenesis site" description="Loss of activity." evidence="3">
    <original>E</original>
    <variation>A</variation>
    <variation>Q</variation>
    <variation>S</variation>
    <location>
        <position position="24"/>
    </location>
</feature>
<feature type="mutagenesis site" description="Loss of activity." evidence="3">
    <original>D</original>
    <variation>V</variation>
    <location>
        <position position="55"/>
    </location>
</feature>
<feature type="mutagenesis site" description="Loss of activity." evidence="3">
    <original>H</original>
    <variation>L</variation>
    <location>
        <position position="79"/>
    </location>
</feature>
<feature type="mutagenesis site" description="15% of wild-type activity." evidence="3">
    <original>H</original>
    <variation>Q</variation>
    <location>
        <position position="79"/>
    </location>
</feature>
<feature type="mutagenesis site" description="Loss of activity." evidence="3">
    <original>N</original>
    <variation>I</variation>
    <location>
        <position position="81"/>
    </location>
</feature>
<feature type="mutagenesis site" description="Loss of activity." evidence="3">
    <original>E</original>
    <variation>Q</variation>
    <variation>V</variation>
    <location>
        <position position="141"/>
    </location>
</feature>
<feature type="sequence conflict" description="In Ref. 5; CAA92813." evidence="7" ref="5">
    <original>S</original>
    <variation>T</variation>
    <location>
        <position position="158"/>
    </location>
</feature>
<feature type="strand" evidence="9">
    <location>
        <begin position="185"/>
        <end position="194"/>
    </location>
</feature>
<feature type="helix" evidence="9">
    <location>
        <begin position="196"/>
        <end position="209"/>
    </location>
</feature>
<feature type="strand" evidence="9">
    <location>
        <begin position="213"/>
        <end position="218"/>
    </location>
</feature>
<feature type="strand" evidence="9">
    <location>
        <begin position="221"/>
        <end position="231"/>
    </location>
</feature>
<feature type="helix" evidence="9">
    <location>
        <begin position="232"/>
        <end position="245"/>
    </location>
</feature>
<feature type="strand" evidence="9">
    <location>
        <begin position="250"/>
        <end position="254"/>
    </location>
</feature>
<keyword id="KW-0002">3D-structure</keyword>
<keyword id="KW-0134">Cell wall</keyword>
<keyword id="KW-0961">Cell wall biogenesis/degradation</keyword>
<keyword id="KW-0178">Competence</keyword>
<keyword id="KW-0903">Direct protein sequencing</keyword>
<keyword id="KW-0378">Hydrolase</keyword>
<keyword id="KW-0479">Metal-binding</keyword>
<keyword id="KW-1185">Reference proteome</keyword>
<keyword id="KW-0677">Repeat</keyword>
<keyword id="KW-0964">Secreted</keyword>
<keyword id="KW-0749">Sporulation</keyword>
<keyword id="KW-0862">Zinc</keyword>
<accession>Q06320</accession>
<gene>
    <name type="primary">cwlC</name>
    <name type="ordered locus">BSU17410</name>
</gene>
<proteinExistence type="evidence at protein level"/>